<name>DYP2_AMYS7</name>
<keyword id="KW-0002">3D-structure</keyword>
<keyword id="KW-0349">Heme</keyword>
<keyword id="KW-0408">Iron</keyword>
<keyword id="KW-0464">Manganese</keyword>
<keyword id="KW-0479">Metal-binding</keyword>
<keyword id="KW-0560">Oxidoreductase</keyword>
<keyword id="KW-0575">Peroxidase</keyword>
<keyword id="KW-0964">Secreted</keyword>
<organism>
    <name type="scientific">Amycolatopsis sp. (strain ATCC 39116 / 75iv2)</name>
    <dbReference type="NCBI Taxonomy" id="385957"/>
    <lineage>
        <taxon>Bacteria</taxon>
        <taxon>Bacillati</taxon>
        <taxon>Actinomycetota</taxon>
        <taxon>Actinomycetes</taxon>
        <taxon>Pseudonocardiales</taxon>
        <taxon>Pseudonocardiaceae</taxon>
        <taxon>Amycolatopsis</taxon>
    </lineage>
</organism>
<sequence>MPVDLSTTLSWKSATGEAATMLDELQPNILKAHVRDRLTVLFLGFGDAAEARTFLNGLSGLMKSARTHLQEVEAHKLTKAVGTPYLGVGLTAHGYATLGVTAPADPSFTAGAKAAVEKLADPAVTEWEGHYQQTIDAVLLLGDATAGPVRTLRRQVEALRPASVTVVGEESGLGLANANGDGIEHFGYVDGRSQPLFLTEDVDAERDTTDGVNDWDPSAPLEQVLVPDPAAPDPTVHFGSYFVFRKLEQNVRLFKEAERDLAHDLGLRGEDRERAGAMLVGRFEDGTPLTAQSAPGSHHPVGNDFSYDSDKLGQKCPFHAHIRKTNPRGSGGAEAPEEERKHLMARRGQTYGRRHDDPNADLPPRLRPAKDVGLLFMAFNSNLGNQFEFTQQIWANNPAFPFPPDGSQPGLDPVIGQGARAPQKYAPEWGHNNVAEATDPIPQAVTMKGGEYFFMPSLAFLRSL</sequence>
<comment type="function">
    <text evidence="2">Displays both high peroxidase and manganese peroxidase activity. Is likely involved in lignin degradation. Also has a Mn-dependent oxidase mode of action that expands its substrate scope in vitro; is thus able to catalyze the O(2)- and Mn-dependent oxidative decarboxylation of 4-methoxymandelate to anisaldehyde.</text>
</comment>
<comment type="catalytic activity">
    <reaction evidence="2">
        <text>1-(4-hydroxy-3-methoxyphenyl)-2-(2-methoxyphenoxy)propane-1,3-diol + H2O2 = guaiacol + vanillin + glycolaldehyde + H2O</text>
        <dbReference type="Rhea" id="RHEA:22396"/>
        <dbReference type="ChEBI" id="CHEBI:15377"/>
        <dbReference type="ChEBI" id="CHEBI:16240"/>
        <dbReference type="ChEBI" id="CHEBI:17071"/>
        <dbReference type="ChEBI" id="CHEBI:18346"/>
        <dbReference type="ChEBI" id="CHEBI:28591"/>
        <dbReference type="ChEBI" id="CHEBI:53650"/>
        <dbReference type="EC" id="1.11.1.16"/>
    </reaction>
</comment>
<comment type="catalytic activity">
    <reaction evidence="2">
        <text>2 Mn(2+) + H2O2 + 2 H(+) = 2 Mn(3+) + 2 H2O</text>
        <dbReference type="Rhea" id="RHEA:22776"/>
        <dbReference type="ChEBI" id="CHEBI:15377"/>
        <dbReference type="ChEBI" id="CHEBI:15378"/>
        <dbReference type="ChEBI" id="CHEBI:16240"/>
        <dbReference type="ChEBI" id="CHEBI:29035"/>
        <dbReference type="ChEBI" id="CHEBI:29041"/>
        <dbReference type="EC" id="1.11.1.16"/>
    </reaction>
</comment>
<comment type="catalytic activity">
    <reaction evidence="2">
        <text>2 a phenolic donor + H2O2 = 2 a phenolic radical donor + 2 H2O</text>
        <dbReference type="Rhea" id="RHEA:56136"/>
        <dbReference type="ChEBI" id="CHEBI:15377"/>
        <dbReference type="ChEBI" id="CHEBI:16240"/>
        <dbReference type="ChEBI" id="CHEBI:139520"/>
        <dbReference type="ChEBI" id="CHEBI:139521"/>
        <dbReference type="EC" id="1.11.1.7"/>
    </reaction>
</comment>
<comment type="catalytic activity">
    <reaction evidence="2">
        <text>Reactive Blue 5 + 2 H2O2 = 2,2'-disulfonyl azobenzene + 3-[(4-amino-6-chloro-1,3,5-triazin-2-yl)amino]benzenesulfonate + phthalate + 2 H2O + 2 H(+)</text>
        <dbReference type="Rhea" id="RHEA:28086"/>
        <dbReference type="ChEBI" id="CHEBI:15377"/>
        <dbReference type="ChEBI" id="CHEBI:15378"/>
        <dbReference type="ChEBI" id="CHEBI:16240"/>
        <dbReference type="ChEBI" id="CHEBI:17563"/>
        <dbReference type="ChEBI" id="CHEBI:63950"/>
        <dbReference type="ChEBI" id="CHEBI:63955"/>
        <dbReference type="ChEBI" id="CHEBI:64278"/>
        <dbReference type="EC" id="1.11.1.19"/>
    </reaction>
</comment>
<comment type="cofactor">
    <cofactor evidence="2">
        <name>heme b</name>
        <dbReference type="ChEBI" id="CHEBI:60344"/>
    </cofactor>
    <text evidence="2">Binds 1 heme b (iron(II)-protoporphyrin IX) group per subunit.</text>
</comment>
<comment type="cofactor">
    <cofactor evidence="2">
        <name>Mn(2+)</name>
        <dbReference type="ChEBI" id="CHEBI:29035"/>
    </cofactor>
</comment>
<comment type="biophysicochemical properties">
    <kinetics>
        <KM evidence="2">13 uM for ABTS</KM>
        <KM evidence="2">48 uM for Reactive Blue 5</KM>
        <KM evidence="2">2.4 uM for Reactive Black 5</KM>
        <KM evidence="2">1.2 mM for 2,4-dichlorophenol</KM>
        <KM evidence="2">210 uM for Mn(2+) (when assaying manganese peroxidase activity)</KM>
        <KM evidence="2">760 uM for Mn(2+) (when assaying 4-methoxymandelate oxidase activity)</KM>
        <text>kcat is 87 sec(-1) for peroxidase activity with ABTS as substrate. kcat is 34 sec(-1) for peroxidase activity with Reactive Blue 5 as substrate. kcat is 0.38 sec(-1) for peroxidase activity with Reactive Black 5 as substrate. kcat is 68 sec(-1) for peroxidase activity with 2,4-dichlorophenol as substrate. kcat is 24 sec(-1) for manganese peroxidase activity.</text>
    </kinetics>
    <phDependence>
        <text evidence="2">Optimum pH is 4.5 for the H(2)O(2)-dependent oxidation of Reactive Blue 5, and 5.0 for the O(2)-dependent oxidation of 4-methoxymandelate.</text>
    </phDependence>
</comment>
<comment type="subunit">
    <text evidence="2">Exists both as a monomeric and oligomeric species in solution; the monomeric form contains no bound heme cofactor and is inactive.</text>
</comment>
<comment type="subcellular location">
    <subcellularLocation>
        <location evidence="5">Secreted</location>
    </subcellularLocation>
    <text>Although no signal sequence is found, the secretory machinery for actinomycetes is not fully characterized, and the low pH optimum for DyP2 along with the observation that many DyPs have been isolated from the secreted protein fraction imply that DyP2 could be secreted and still possibly play a role in extracellular oxidation chemistry (PubMed:23054399).</text>
</comment>
<comment type="similarity">
    <text evidence="4">Belongs to the DyP-type peroxidase family.</text>
</comment>
<proteinExistence type="evidence at protein level"/>
<protein>
    <recommendedName>
        <fullName evidence="3">Multifunctional dye peroxidase DyP2</fullName>
        <ecNumber evidence="2">1.11.1.16</ecNumber>
        <ecNumber evidence="2">1.11.1.19</ecNumber>
        <ecNumber evidence="2">1.11.1.7</ecNumber>
    </recommendedName>
    <alternativeName>
        <fullName evidence="3">Dye decolorizing peroxidase 2</fullName>
        <shortName evidence="3">DyP2</shortName>
    </alternativeName>
    <alternativeName>
        <fullName evidence="3">Manganese peroxidase</fullName>
    </alternativeName>
</protein>
<feature type="chain" id="PRO_0000433002" description="Multifunctional dye peroxidase DyP2">
    <location>
        <begin position="1"/>
        <end position="464"/>
    </location>
</feature>
<feature type="active site" description="Proton acceptor" evidence="1">
    <location>
        <position position="203"/>
    </location>
</feature>
<feature type="binding site" evidence="2">
    <location>
        <position position="258"/>
    </location>
    <ligand>
        <name>Mn(2+)</name>
        <dbReference type="ChEBI" id="CHEBI:29035"/>
    </ligand>
</feature>
<feature type="binding site" evidence="2">
    <location>
        <position position="273"/>
    </location>
    <ligand>
        <name>Mn(2+)</name>
        <dbReference type="ChEBI" id="CHEBI:29035"/>
    </ligand>
</feature>
<feature type="binding site" evidence="2">
    <location>
        <position position="284"/>
    </location>
    <ligand>
        <name>Mn(2+)</name>
        <dbReference type="ChEBI" id="CHEBI:29035"/>
    </ligand>
</feature>
<feature type="binding site" description="axial binding residue" evidence="2 6">
    <location>
        <position position="321"/>
    </location>
    <ligand>
        <name>heme</name>
        <dbReference type="ChEBI" id="CHEBI:30413"/>
    </ligand>
    <ligandPart>
        <name>Fe</name>
        <dbReference type="ChEBI" id="CHEBI:18248"/>
    </ligandPart>
</feature>
<feature type="turn" evidence="7">
    <location>
        <begin position="11"/>
        <end position="13"/>
    </location>
</feature>
<feature type="helix" evidence="7">
    <location>
        <begin position="16"/>
        <end position="24"/>
    </location>
</feature>
<feature type="strand" evidence="7">
    <location>
        <begin position="29"/>
        <end position="31"/>
    </location>
</feature>
<feature type="strand" evidence="7">
    <location>
        <begin position="36"/>
        <end position="46"/>
    </location>
</feature>
<feature type="helix" evidence="7">
    <location>
        <begin position="48"/>
        <end position="59"/>
    </location>
</feature>
<feature type="helix" evidence="7">
    <location>
        <begin position="65"/>
        <end position="78"/>
    </location>
</feature>
<feature type="strand" evidence="7">
    <location>
        <begin position="85"/>
        <end position="90"/>
    </location>
</feature>
<feature type="helix" evidence="7">
    <location>
        <begin position="92"/>
        <end position="98"/>
    </location>
</feature>
<feature type="helix" evidence="7">
    <location>
        <begin position="106"/>
        <end position="110"/>
    </location>
</feature>
<feature type="helix" evidence="7">
    <location>
        <begin position="112"/>
        <end position="115"/>
    </location>
</feature>
<feature type="helix" evidence="7">
    <location>
        <begin position="116"/>
        <end position="119"/>
    </location>
</feature>
<feature type="helix" evidence="7">
    <location>
        <begin position="124"/>
        <end position="126"/>
    </location>
</feature>
<feature type="helix" evidence="7">
    <location>
        <begin position="129"/>
        <end position="132"/>
    </location>
</feature>
<feature type="strand" evidence="7">
    <location>
        <begin position="137"/>
        <end position="145"/>
    </location>
</feature>
<feature type="helix" evidence="7">
    <location>
        <begin position="146"/>
        <end position="159"/>
    </location>
</feature>
<feature type="strand" evidence="7">
    <location>
        <begin position="164"/>
        <end position="173"/>
    </location>
</feature>
<feature type="helix" evidence="7">
    <location>
        <begin position="199"/>
        <end position="208"/>
    </location>
</feature>
<feature type="strand" evidence="7">
    <location>
        <begin position="212"/>
        <end position="214"/>
    </location>
</feature>
<feature type="helix" evidence="7">
    <location>
        <begin position="221"/>
        <end position="223"/>
    </location>
</feature>
<feature type="turn" evidence="7">
    <location>
        <begin position="234"/>
        <end position="236"/>
    </location>
</feature>
<feature type="strand" evidence="7">
    <location>
        <begin position="238"/>
        <end position="249"/>
    </location>
</feature>
<feature type="helix" evidence="7">
    <location>
        <begin position="251"/>
        <end position="264"/>
    </location>
</feature>
<feature type="helix" evidence="7">
    <location>
        <begin position="269"/>
        <end position="273"/>
    </location>
</feature>
<feature type="helix" evidence="7">
    <location>
        <begin position="274"/>
        <end position="280"/>
    </location>
</feature>
<feature type="turn" evidence="7">
    <location>
        <begin position="289"/>
        <end position="291"/>
    </location>
</feature>
<feature type="strand" evidence="7">
    <location>
        <begin position="293"/>
        <end position="295"/>
    </location>
</feature>
<feature type="turn" evidence="7">
    <location>
        <begin position="298"/>
        <end position="301"/>
    </location>
</feature>
<feature type="strand" evidence="7">
    <location>
        <begin position="314"/>
        <end position="316"/>
    </location>
</feature>
<feature type="helix" evidence="7">
    <location>
        <begin position="321"/>
        <end position="325"/>
    </location>
</feature>
<feature type="strand" evidence="7">
    <location>
        <begin position="332"/>
        <end position="334"/>
    </location>
</feature>
<feature type="helix" evidence="7">
    <location>
        <begin position="336"/>
        <end position="339"/>
    </location>
</feature>
<feature type="helix" evidence="7">
    <location>
        <begin position="340"/>
        <end position="342"/>
    </location>
</feature>
<feature type="strand" evidence="7">
    <location>
        <begin position="349"/>
        <end position="351"/>
    </location>
</feature>
<feature type="helix" evidence="7">
    <location>
        <begin position="364"/>
        <end position="366"/>
    </location>
</feature>
<feature type="strand" evidence="7">
    <location>
        <begin position="373"/>
        <end position="381"/>
    </location>
</feature>
<feature type="turn" evidence="7">
    <location>
        <begin position="383"/>
        <end position="386"/>
    </location>
</feature>
<feature type="helix" evidence="7">
    <location>
        <begin position="387"/>
        <end position="392"/>
    </location>
</feature>
<feature type="turn" evidence="7">
    <location>
        <begin position="393"/>
        <end position="396"/>
    </location>
</feature>
<feature type="turn" evidence="7">
    <location>
        <begin position="413"/>
        <end position="415"/>
    </location>
</feature>
<feature type="strand" evidence="7">
    <location>
        <begin position="445"/>
        <end position="455"/>
    </location>
</feature>
<feature type="helix" evidence="7">
    <location>
        <begin position="458"/>
        <end position="462"/>
    </location>
</feature>
<evidence type="ECO:0000250" key="1">
    <source>
        <dbReference type="UniProtKB" id="Q47KB1"/>
    </source>
</evidence>
<evidence type="ECO:0000269" key="2">
    <source>
    </source>
</evidence>
<evidence type="ECO:0000303" key="3">
    <source>
    </source>
</evidence>
<evidence type="ECO:0000305" key="4"/>
<evidence type="ECO:0000305" key="5">
    <source>
    </source>
</evidence>
<evidence type="ECO:0007744" key="6">
    <source>
        <dbReference type="PDB" id="4G2C"/>
    </source>
</evidence>
<evidence type="ECO:0007829" key="7">
    <source>
        <dbReference type="PDB" id="4G2C"/>
    </source>
</evidence>
<accession>K7N5M8</accession>
<reference key="1">
    <citation type="journal article" date="2012" name="ACS Chem. Biol.">
        <title>Identification and characterization of a multifunctional dye peroxidase from a lignin-reactive bacterium.</title>
        <authorList>
            <person name="Brown M.E."/>
            <person name="Barros T."/>
            <person name="Chang M.C."/>
        </authorList>
    </citation>
    <scope>X-RAY CRYSTALLOGRAPHY (2.25 ANGSTROMS) IN COMPLEX WITH HEME AND MANGANESE</scope>
    <scope>FUNCTION</scope>
    <scope>CATALYTIC ACTIVITY</scope>
    <scope>SUBSTRATE SPECIFICITY</scope>
    <scope>COFACTOR</scope>
    <scope>BIOPHYSICOCHEMICAL PROPERTIES</scope>
    <scope>SUBUNIT</scope>
    <source>
        <strain>ATCC 39116 / 75iv2</strain>
    </source>
</reference>
<gene>
    <name evidence="3" type="primary">dyp2</name>
</gene>
<dbReference type="EC" id="1.11.1.16" evidence="2"/>
<dbReference type="EC" id="1.11.1.19" evidence="2"/>
<dbReference type="EC" id="1.11.1.7" evidence="2"/>
<dbReference type="RefSeq" id="WP_020421762.1">
    <property type="nucleotide sequence ID" value="NZ_AFWY03000046.1"/>
</dbReference>
<dbReference type="PDB" id="4G2C">
    <property type="method" value="X-ray"/>
    <property type="resolution" value="2.25 A"/>
    <property type="chains" value="A/B=1-464"/>
</dbReference>
<dbReference type="PDBsum" id="4G2C"/>
<dbReference type="SMR" id="K7N5M8"/>
<dbReference type="BRENDA" id="1.11.1.19">
    <property type="organism ID" value="316"/>
</dbReference>
<dbReference type="SABIO-RK" id="K7N5M8"/>
<dbReference type="EvolutionaryTrace" id="K7N5M8"/>
<dbReference type="GO" id="GO:0005829">
    <property type="term" value="C:cytosol"/>
    <property type="evidence" value="ECO:0007669"/>
    <property type="project" value="TreeGrafter"/>
</dbReference>
<dbReference type="GO" id="GO:0005576">
    <property type="term" value="C:extracellular region"/>
    <property type="evidence" value="ECO:0007669"/>
    <property type="project" value="UniProtKB-SubCell"/>
</dbReference>
<dbReference type="GO" id="GO:0020037">
    <property type="term" value="F:heme binding"/>
    <property type="evidence" value="ECO:0000314"/>
    <property type="project" value="UniProtKB"/>
</dbReference>
<dbReference type="GO" id="GO:0140825">
    <property type="term" value="F:lactoperoxidase activity"/>
    <property type="evidence" value="ECO:0007669"/>
    <property type="project" value="UniProtKB-EC"/>
</dbReference>
<dbReference type="GO" id="GO:0030145">
    <property type="term" value="F:manganese ion binding"/>
    <property type="evidence" value="ECO:0000314"/>
    <property type="project" value="UniProtKB"/>
</dbReference>
<dbReference type="GO" id="GO:0016689">
    <property type="term" value="F:manganese peroxidase activity"/>
    <property type="evidence" value="ECO:0007669"/>
    <property type="project" value="RHEA"/>
</dbReference>
<dbReference type="GO" id="GO:0004601">
    <property type="term" value="F:peroxidase activity"/>
    <property type="evidence" value="ECO:0000314"/>
    <property type="project" value="UniProtKB"/>
</dbReference>
<dbReference type="GO" id="GO:0052750">
    <property type="term" value="F:reactive-black-5:hydrogen-peroxide oxidoreductase activity"/>
    <property type="evidence" value="ECO:0007669"/>
    <property type="project" value="UniProtKB-EC"/>
</dbReference>
<dbReference type="InterPro" id="IPR011008">
    <property type="entry name" value="Dimeric_a/b-barrel"/>
</dbReference>
<dbReference type="InterPro" id="IPR049509">
    <property type="entry name" value="DyP_N"/>
</dbReference>
<dbReference type="InterPro" id="IPR006314">
    <property type="entry name" value="Dyp_peroxidase"/>
</dbReference>
<dbReference type="NCBIfam" id="TIGR01413">
    <property type="entry name" value="Dyp_perox_fam"/>
    <property type="match status" value="1"/>
</dbReference>
<dbReference type="PANTHER" id="PTHR30521:SF4">
    <property type="entry name" value="DEFERROCHELATASE"/>
    <property type="match status" value="1"/>
</dbReference>
<dbReference type="PANTHER" id="PTHR30521">
    <property type="entry name" value="DEFERROCHELATASE/PEROXIDASE"/>
    <property type="match status" value="1"/>
</dbReference>
<dbReference type="Pfam" id="PF21105">
    <property type="entry name" value="DyP_N"/>
    <property type="match status" value="1"/>
</dbReference>
<dbReference type="SUPFAM" id="SSF54909">
    <property type="entry name" value="Dimeric alpha+beta barrel"/>
    <property type="match status" value="1"/>
</dbReference>
<dbReference type="PROSITE" id="PS51404">
    <property type="entry name" value="DYP_PEROXIDASE"/>
    <property type="match status" value="1"/>
</dbReference>